<comment type="function">
    <text evidence="1">Carrier of the growing fatty acid chain in fatty acid biosynthesis.</text>
</comment>
<comment type="pathway">
    <text evidence="1">Lipid metabolism; fatty acid biosynthesis.</text>
</comment>
<comment type="subcellular location">
    <subcellularLocation>
        <location evidence="1">Cytoplasm</location>
    </subcellularLocation>
</comment>
<comment type="PTM">
    <text evidence="1">4'-phosphopantetheine is transferred from CoA to a specific serine of apo-ACP by AcpS. This modification is essential for activity because fatty acids are bound in thioester linkage to the sulfhydryl of the prosthetic group.</text>
</comment>
<comment type="similarity">
    <text evidence="1">Belongs to the acyl carrier protein (ACP) family.</text>
</comment>
<protein>
    <recommendedName>
        <fullName evidence="1">Acyl carrier protein 2</fullName>
        <shortName evidence="1">ACP 2</shortName>
    </recommendedName>
</protein>
<proteinExistence type="inferred from homology"/>
<sequence>MTETEILERIRSIFQENFAIDPARVTPEAHLFEELDLDSIDAVDLAIKLQEMTGRRIKPEEFKSVRTVGDVIGAVQSLLAA</sequence>
<organism>
    <name type="scientific">Ralstonia nicotianae (strain ATCC BAA-1114 / GMI1000)</name>
    <name type="common">Ralstonia solanacearum</name>
    <dbReference type="NCBI Taxonomy" id="267608"/>
    <lineage>
        <taxon>Bacteria</taxon>
        <taxon>Pseudomonadati</taxon>
        <taxon>Pseudomonadota</taxon>
        <taxon>Betaproteobacteria</taxon>
        <taxon>Burkholderiales</taxon>
        <taxon>Burkholderiaceae</taxon>
        <taxon>Ralstonia</taxon>
        <taxon>Ralstonia solanacearum species complex</taxon>
    </lineage>
</organism>
<gene>
    <name evidence="1" type="primary">acpP2</name>
    <name type="ordered locus">RSp0369</name>
    <name type="ORF">RS00792</name>
</gene>
<reference key="1">
    <citation type="journal article" date="2002" name="Nature">
        <title>Genome sequence of the plant pathogen Ralstonia solanacearum.</title>
        <authorList>
            <person name="Salanoubat M."/>
            <person name="Genin S."/>
            <person name="Artiguenave F."/>
            <person name="Gouzy J."/>
            <person name="Mangenot S."/>
            <person name="Arlat M."/>
            <person name="Billault A."/>
            <person name="Brottier P."/>
            <person name="Camus J.-C."/>
            <person name="Cattolico L."/>
            <person name="Chandler M."/>
            <person name="Choisne N."/>
            <person name="Claudel-Renard C."/>
            <person name="Cunnac S."/>
            <person name="Demange N."/>
            <person name="Gaspin C."/>
            <person name="Lavie M."/>
            <person name="Moisan A."/>
            <person name="Robert C."/>
            <person name="Saurin W."/>
            <person name="Schiex T."/>
            <person name="Siguier P."/>
            <person name="Thebault P."/>
            <person name="Whalen M."/>
            <person name="Wincker P."/>
            <person name="Levy M."/>
            <person name="Weissenbach J."/>
            <person name="Boucher C.A."/>
        </authorList>
    </citation>
    <scope>NUCLEOTIDE SEQUENCE [LARGE SCALE GENOMIC DNA]</scope>
    <source>
        <strain>ATCC BAA-1114 / GMI1000</strain>
    </source>
</reference>
<name>ACP2_RALN1</name>
<geneLocation type="plasmid">
    <name>megaplasmid Rsp</name>
</geneLocation>
<evidence type="ECO:0000255" key="1">
    <source>
        <dbReference type="HAMAP-Rule" id="MF_01217"/>
    </source>
</evidence>
<evidence type="ECO:0000255" key="2">
    <source>
        <dbReference type="PROSITE-ProRule" id="PRU00258"/>
    </source>
</evidence>
<feature type="chain" id="PRO_0000180172" description="Acyl carrier protein 2">
    <location>
        <begin position="1"/>
        <end position="81"/>
    </location>
</feature>
<feature type="domain" description="Carrier" evidence="2">
    <location>
        <begin position="1"/>
        <end position="79"/>
    </location>
</feature>
<feature type="modified residue" description="O-(pantetheine 4'-phosphoryl)serine" evidence="2">
    <location>
        <position position="39"/>
    </location>
</feature>
<accession>Q8XSU8</accession>
<dbReference type="EMBL" id="AL646053">
    <property type="protein sequence ID" value="CAD17520.1"/>
    <property type="molecule type" value="Genomic_DNA"/>
</dbReference>
<dbReference type="RefSeq" id="WP_011003681.1">
    <property type="nucleotide sequence ID" value="NC_003296.1"/>
</dbReference>
<dbReference type="SMR" id="Q8XSU8"/>
<dbReference type="STRING" id="267608.RSp0369"/>
<dbReference type="EnsemblBacteria" id="CAD17520">
    <property type="protein sequence ID" value="CAD17520"/>
    <property type="gene ID" value="RSp0369"/>
</dbReference>
<dbReference type="KEGG" id="rso:RSp0369"/>
<dbReference type="eggNOG" id="COG0236">
    <property type="taxonomic scope" value="Bacteria"/>
</dbReference>
<dbReference type="HOGENOM" id="CLU_108696_5_4_4"/>
<dbReference type="UniPathway" id="UPA00094"/>
<dbReference type="PHI-base" id="PHI:123517"/>
<dbReference type="Proteomes" id="UP000001436">
    <property type="component" value="Plasmid megaplasmid Rsp"/>
</dbReference>
<dbReference type="GO" id="GO:0005829">
    <property type="term" value="C:cytosol"/>
    <property type="evidence" value="ECO:0007669"/>
    <property type="project" value="TreeGrafter"/>
</dbReference>
<dbReference type="GO" id="GO:0016020">
    <property type="term" value="C:membrane"/>
    <property type="evidence" value="ECO:0007669"/>
    <property type="project" value="GOC"/>
</dbReference>
<dbReference type="GO" id="GO:0000035">
    <property type="term" value="F:acyl binding"/>
    <property type="evidence" value="ECO:0007669"/>
    <property type="project" value="TreeGrafter"/>
</dbReference>
<dbReference type="GO" id="GO:0000036">
    <property type="term" value="F:acyl carrier activity"/>
    <property type="evidence" value="ECO:0007669"/>
    <property type="project" value="UniProtKB-UniRule"/>
</dbReference>
<dbReference type="GO" id="GO:0009245">
    <property type="term" value="P:lipid A biosynthetic process"/>
    <property type="evidence" value="ECO:0007669"/>
    <property type="project" value="TreeGrafter"/>
</dbReference>
<dbReference type="Gene3D" id="1.10.1200.10">
    <property type="entry name" value="ACP-like"/>
    <property type="match status" value="1"/>
</dbReference>
<dbReference type="HAMAP" id="MF_01217">
    <property type="entry name" value="Acyl_carrier"/>
    <property type="match status" value="1"/>
</dbReference>
<dbReference type="InterPro" id="IPR003231">
    <property type="entry name" value="ACP"/>
</dbReference>
<dbReference type="InterPro" id="IPR036736">
    <property type="entry name" value="ACP-like_sf"/>
</dbReference>
<dbReference type="InterPro" id="IPR009081">
    <property type="entry name" value="PP-bd_ACP"/>
</dbReference>
<dbReference type="NCBIfam" id="NF003757">
    <property type="entry name" value="PRK05350.1"/>
    <property type="match status" value="1"/>
</dbReference>
<dbReference type="PANTHER" id="PTHR20863">
    <property type="entry name" value="ACYL CARRIER PROTEIN"/>
    <property type="match status" value="1"/>
</dbReference>
<dbReference type="PANTHER" id="PTHR20863:SF69">
    <property type="entry name" value="ACYL CARRIER PROTEIN"/>
    <property type="match status" value="1"/>
</dbReference>
<dbReference type="Pfam" id="PF00550">
    <property type="entry name" value="PP-binding"/>
    <property type="match status" value="1"/>
</dbReference>
<dbReference type="SUPFAM" id="SSF47336">
    <property type="entry name" value="ACP-like"/>
    <property type="match status" value="1"/>
</dbReference>
<dbReference type="PROSITE" id="PS50075">
    <property type="entry name" value="CARRIER"/>
    <property type="match status" value="1"/>
</dbReference>
<keyword id="KW-0963">Cytoplasm</keyword>
<keyword id="KW-0275">Fatty acid biosynthesis</keyword>
<keyword id="KW-0276">Fatty acid metabolism</keyword>
<keyword id="KW-0444">Lipid biosynthesis</keyword>
<keyword id="KW-0443">Lipid metabolism</keyword>
<keyword id="KW-0596">Phosphopantetheine</keyword>
<keyword id="KW-0597">Phosphoprotein</keyword>
<keyword id="KW-0614">Plasmid</keyword>
<keyword id="KW-1185">Reference proteome</keyword>